<organism>
    <name type="scientific">Chlamydomonas reinhardtii</name>
    <name type="common">Chlamydomonas smithii</name>
    <dbReference type="NCBI Taxonomy" id="3055"/>
    <lineage>
        <taxon>Eukaryota</taxon>
        <taxon>Viridiplantae</taxon>
        <taxon>Chlorophyta</taxon>
        <taxon>core chlorophytes</taxon>
        <taxon>Chlorophyceae</taxon>
        <taxon>CS clade</taxon>
        <taxon>Chlamydomonadales</taxon>
        <taxon>Chlamydomonadaceae</taxon>
        <taxon>Chlamydomonas</taxon>
    </lineage>
</organism>
<comment type="function">
    <text>Core component of nucleosome. Nucleosomes wrap and compact DNA into chromatin, limiting DNA accessibility to the cellular machineries which require DNA as a template. Histones thereby play a central role in transcription regulation, DNA repair, DNA replication and chromosomal stability. DNA accessibility is regulated via a complex set of post-translational modifications of histones, also called histone code, and nucleosome remodeling.</text>
</comment>
<comment type="subunit">
    <text>The nucleosome is a histone octamer containing two molecules each of H2A, H2B, H3 and H4 assembled in one H3-H4 heterotetramer and two H2A-H2B heterodimers. The octamer wraps approximately 147 bp of DNA.</text>
</comment>
<comment type="subcellular location">
    <subcellularLocation>
        <location>Nucleus</location>
    </subcellularLocation>
    <subcellularLocation>
        <location>Chromosome</location>
    </subcellularLocation>
</comment>
<comment type="developmental stage">
    <text evidence="4">Up-regulated during the dark period.</text>
</comment>
<comment type="PTM">
    <text>The N-terminus is blocked.</text>
</comment>
<comment type="PTM">
    <text evidence="1 3 4">Can be acetylated to form H2BK33ac and H2BK34ac (By similarity). Acetylated mainly on the ubiquitinated form.</text>
</comment>
<comment type="PTM">
    <text>Monoubiquitinated to form H2BK143ub1; which is increased during the light period and may give a specific tag for epigenetic transcriptional activation.</text>
</comment>
<comment type="similarity">
    <text evidence="5">Belongs to the histone H2B family.</text>
</comment>
<comment type="caution">
    <text evidence="5">To ensure consistency between histone entries, we follow the 'Brno' nomenclature for histone modifications, with positions referring to those used in the literature for the 'closest' model organism. Due to slight variations in histone sequences between organisms and to the presence of initiator methionine in UniProtKB/Swiss-Prot sequences, the actual positions of modified amino acids in the sequence generally differ. In this entry the following conventions are used: H2BK33ac = acetylated Lys-40; H2BK34ac = acetylated Lys-41; H2BK143ub1 = monoubiquitinated Lys-152.</text>
</comment>
<keyword id="KW-0007">Acetylation</keyword>
<keyword id="KW-0158">Chromosome</keyword>
<keyword id="KW-0903">Direct protein sequencing</keyword>
<keyword id="KW-0238">DNA-binding</keyword>
<keyword id="KW-1017">Isopeptide bond</keyword>
<keyword id="KW-0544">Nucleosome core</keyword>
<keyword id="KW-0539">Nucleus</keyword>
<keyword id="KW-0832">Ubl conjugation</keyword>
<feature type="initiator methionine" description="Removed" evidence="5">
    <location>
        <position position="1"/>
    </location>
</feature>
<feature type="chain" id="PRO_0000071911" description="Histone H2B.2">
    <location>
        <begin position="2"/>
        <end position="156"/>
    </location>
</feature>
<feature type="region of interest" description="Disordered" evidence="2">
    <location>
        <begin position="1"/>
        <end position="63"/>
    </location>
</feature>
<feature type="compositionally biased region" description="Basic and acidic residues" evidence="2">
    <location>
        <begin position="1"/>
        <end position="10"/>
    </location>
</feature>
<feature type="compositionally biased region" description="Basic and acidic residues" evidence="2">
    <location>
        <begin position="24"/>
        <end position="58"/>
    </location>
</feature>
<feature type="modified residue" description="N6-acetyllysine" evidence="1">
    <location>
        <position position="40"/>
    </location>
</feature>
<feature type="modified residue" description="N6-acetyllysine" evidence="1">
    <location>
        <position position="41"/>
    </location>
</feature>
<feature type="cross-link" description="Glycyl lysine isopeptide (Lys-Gly) (interchain with G-Cter in ubiquitin)" evidence="1">
    <location>
        <position position="152"/>
    </location>
</feature>
<evidence type="ECO:0000250" key="1"/>
<evidence type="ECO:0000256" key="2">
    <source>
        <dbReference type="SAM" id="MobiDB-lite"/>
    </source>
</evidence>
<evidence type="ECO:0000269" key="3">
    <source>
    </source>
</evidence>
<evidence type="ECO:0000269" key="4">
    <source>
    </source>
</evidence>
<evidence type="ECO:0000305" key="5"/>
<protein>
    <recommendedName>
        <fullName>Histone H2B.2</fullName>
    </recommendedName>
    <alternativeName>
        <fullName>H2B-II</fullName>
    </alternativeName>
</protein>
<proteinExistence type="evidence at protein level"/>
<accession>P54345</accession>
<sequence>MAPKKDEKPATRAATQEAGVEATAKAEAKPKAEKAAKKAKKEPAKKAAKEPKGDGEKKDKKKKSAVETYKLYIYKVLKQVHPDTGISSKAMSIMNSFINDIFEKVATEASKLSRYNKKPTVTSREIQTAVRLVLPGELAKHAVSEGTKAVTKFTSG</sequence>
<reference key="1">
    <citation type="journal article" date="1995" name="Curr. Genet.">
        <title>The organization structure and regulatory elements of Chlamydomonas histone genes reveal features linking plant and animal genes.</title>
        <authorList>
            <person name="Fabry S."/>
            <person name="Mueller K."/>
            <person name="Lindauer A."/>
            <person name="Park P.B."/>
            <person name="Cornelius T."/>
            <person name="Schmitt R."/>
        </authorList>
    </citation>
    <scope>NUCLEOTIDE SEQUENCE [GENOMIC DNA]</scope>
</reference>
<reference key="2">
    <citation type="journal article" date="1992" name="Arch. Biochem. Biophys.">
        <title>Purification of Chlamydomonas 28-kDa ubiquitinated protein and its identification as ubiquitinated histone H2B.</title>
        <authorList>
            <person name="Shimogawara K."/>
            <person name="Muto S."/>
        </authorList>
    </citation>
    <scope>PROTEIN SEQUENCE OF 64-104 AND 109-155</scope>
    <scope>UBIQUITINATION AT LYS-152</scope>
    <source>
        <strain>cw15</strain>
    </source>
</reference>
<reference key="3">
    <citation type="journal article" date="1995" name="Plant Physiol.">
        <title>Histones of Chlamydomonas reinhardtii. Synthesis, acetylation, and methylation.</title>
        <authorList>
            <person name="Waterborg J.H."/>
            <person name="Robertson A.J."/>
            <person name="Tatar D.L."/>
            <person name="Borza C.M."/>
            <person name="Davie J.R."/>
        </authorList>
    </citation>
    <scope>UBIQUITINATION</scope>
    <scope>ACETYLATION</scope>
    <scope>DEVELOPMENTAL STAGE</scope>
    <source>
        <strain>cw15</strain>
    </source>
</reference>
<dbReference type="EMBL" id="U16724">
    <property type="protein sequence ID" value="AAA98446.1"/>
    <property type="molecule type" value="Genomic_DNA"/>
</dbReference>
<dbReference type="PIR" id="S59583">
    <property type="entry name" value="S59583"/>
</dbReference>
<dbReference type="SMR" id="P54345"/>
<dbReference type="PaxDb" id="3055-EDP08976"/>
<dbReference type="eggNOG" id="KOG1744">
    <property type="taxonomic scope" value="Eukaryota"/>
</dbReference>
<dbReference type="GO" id="GO:0000786">
    <property type="term" value="C:nucleosome"/>
    <property type="evidence" value="ECO:0007669"/>
    <property type="project" value="UniProtKB-KW"/>
</dbReference>
<dbReference type="GO" id="GO:0005634">
    <property type="term" value="C:nucleus"/>
    <property type="evidence" value="ECO:0007669"/>
    <property type="project" value="UniProtKB-SubCell"/>
</dbReference>
<dbReference type="GO" id="GO:0003677">
    <property type="term" value="F:DNA binding"/>
    <property type="evidence" value="ECO:0007669"/>
    <property type="project" value="UniProtKB-KW"/>
</dbReference>
<dbReference type="GO" id="GO:0046982">
    <property type="term" value="F:protein heterodimerization activity"/>
    <property type="evidence" value="ECO:0007669"/>
    <property type="project" value="InterPro"/>
</dbReference>
<dbReference type="GO" id="GO:0030527">
    <property type="term" value="F:structural constituent of chromatin"/>
    <property type="evidence" value="ECO:0007669"/>
    <property type="project" value="InterPro"/>
</dbReference>
<dbReference type="CDD" id="cd22910">
    <property type="entry name" value="HFD_H2B"/>
    <property type="match status" value="1"/>
</dbReference>
<dbReference type="FunFam" id="1.10.20.10:FF:000014">
    <property type="entry name" value="Histone H2B"/>
    <property type="match status" value="1"/>
</dbReference>
<dbReference type="Gene3D" id="1.10.20.10">
    <property type="entry name" value="Histone, subunit A"/>
    <property type="match status" value="1"/>
</dbReference>
<dbReference type="InterPro" id="IPR009072">
    <property type="entry name" value="Histone-fold"/>
</dbReference>
<dbReference type="InterPro" id="IPR007125">
    <property type="entry name" value="Histone_H2A/H2B/H3"/>
</dbReference>
<dbReference type="InterPro" id="IPR000558">
    <property type="entry name" value="Histone_H2B"/>
</dbReference>
<dbReference type="InterPro" id="IPR055333">
    <property type="entry name" value="HISTONE_H2B_site"/>
</dbReference>
<dbReference type="PANTHER" id="PTHR23428">
    <property type="entry name" value="HISTONE H2B"/>
    <property type="match status" value="1"/>
</dbReference>
<dbReference type="Pfam" id="PF00125">
    <property type="entry name" value="Histone"/>
    <property type="match status" value="1"/>
</dbReference>
<dbReference type="PRINTS" id="PR00621">
    <property type="entry name" value="HISTONEH2B"/>
</dbReference>
<dbReference type="SMART" id="SM00427">
    <property type="entry name" value="H2B"/>
    <property type="match status" value="1"/>
</dbReference>
<dbReference type="SUPFAM" id="SSF47113">
    <property type="entry name" value="Histone-fold"/>
    <property type="match status" value="1"/>
</dbReference>
<dbReference type="PROSITE" id="PS00357">
    <property type="entry name" value="HISTONE_H2B"/>
    <property type="match status" value="1"/>
</dbReference>
<name>H2B2_CHLRE</name>